<comment type="similarity">
    <text evidence="1">Belongs to the UPF0237 family.</text>
</comment>
<dbReference type="EMBL" id="AE005176">
    <property type="protein sequence ID" value="AAK05044.1"/>
    <property type="molecule type" value="Genomic_DNA"/>
</dbReference>
<dbReference type="PIR" id="B86743">
    <property type="entry name" value="B86743"/>
</dbReference>
<dbReference type="RefSeq" id="NP_267102.1">
    <property type="nucleotide sequence ID" value="NC_002662.1"/>
</dbReference>
<dbReference type="RefSeq" id="WP_003130922.1">
    <property type="nucleotide sequence ID" value="NC_002662.1"/>
</dbReference>
<dbReference type="SMR" id="Q9CGZ6"/>
<dbReference type="PaxDb" id="272623-L172073"/>
<dbReference type="EnsemblBacteria" id="AAK05044">
    <property type="protein sequence ID" value="AAK05044"/>
    <property type="gene ID" value="L172073"/>
</dbReference>
<dbReference type="KEGG" id="lla:L172073"/>
<dbReference type="PATRIC" id="fig|272623.7.peg.1012"/>
<dbReference type="eggNOG" id="COG3830">
    <property type="taxonomic scope" value="Bacteria"/>
</dbReference>
<dbReference type="HOGENOM" id="CLU_155669_2_0_9"/>
<dbReference type="OrthoDB" id="9803078at2"/>
<dbReference type="Proteomes" id="UP000002196">
    <property type="component" value="Chromosome"/>
</dbReference>
<dbReference type="CDD" id="cd04872">
    <property type="entry name" value="ACT_1ZPV"/>
    <property type="match status" value="1"/>
</dbReference>
<dbReference type="Gene3D" id="3.30.70.260">
    <property type="match status" value="1"/>
</dbReference>
<dbReference type="HAMAP" id="MF_01054">
    <property type="entry name" value="UPF0237"/>
    <property type="match status" value="1"/>
</dbReference>
<dbReference type="InterPro" id="IPR045865">
    <property type="entry name" value="ACT-like_dom_sf"/>
</dbReference>
<dbReference type="InterPro" id="IPR002912">
    <property type="entry name" value="ACT_dom"/>
</dbReference>
<dbReference type="InterPro" id="IPR050990">
    <property type="entry name" value="UPF0237/GcvR_regulator"/>
</dbReference>
<dbReference type="InterPro" id="IPR022986">
    <property type="entry name" value="UPF0237_ACT"/>
</dbReference>
<dbReference type="NCBIfam" id="NF001220">
    <property type="entry name" value="PRK00194.1"/>
    <property type="match status" value="1"/>
</dbReference>
<dbReference type="PANTHER" id="PTHR34875">
    <property type="entry name" value="UPF0237 PROTEIN MJ1558"/>
    <property type="match status" value="1"/>
</dbReference>
<dbReference type="PANTHER" id="PTHR34875:SF6">
    <property type="entry name" value="UPF0237 PROTEIN MJ1558"/>
    <property type="match status" value="1"/>
</dbReference>
<dbReference type="Pfam" id="PF13740">
    <property type="entry name" value="ACT_6"/>
    <property type="match status" value="1"/>
</dbReference>
<dbReference type="SUPFAM" id="SSF55021">
    <property type="entry name" value="ACT-like"/>
    <property type="match status" value="1"/>
</dbReference>
<dbReference type="PROSITE" id="PS51671">
    <property type="entry name" value="ACT"/>
    <property type="match status" value="1"/>
</dbReference>
<protein>
    <recommendedName>
        <fullName evidence="1">UPF0237 protein YjhC</fullName>
    </recommendedName>
</protein>
<feature type="chain" id="PRO_0000219899" description="UPF0237 protein YjhC">
    <location>
        <begin position="1"/>
        <end position="87"/>
    </location>
</feature>
<feature type="domain" description="ACT" evidence="1">
    <location>
        <begin position="4"/>
        <end position="76"/>
    </location>
</feature>
<proteinExistence type="inferred from homology"/>
<keyword id="KW-1185">Reference proteome</keyword>
<name>YJHC_LACLA</name>
<reference key="1">
    <citation type="journal article" date="2001" name="Genome Res.">
        <title>The complete genome sequence of the lactic acid bacterium Lactococcus lactis ssp. lactis IL1403.</title>
        <authorList>
            <person name="Bolotin A."/>
            <person name="Wincker P."/>
            <person name="Mauger S."/>
            <person name="Jaillon O."/>
            <person name="Malarme K."/>
            <person name="Weissenbach J."/>
            <person name="Ehrlich S.D."/>
            <person name="Sorokin A."/>
        </authorList>
    </citation>
    <scope>NUCLEOTIDE SEQUENCE [LARGE SCALE GENOMIC DNA]</scope>
    <source>
        <strain>IL1403</strain>
    </source>
</reference>
<gene>
    <name type="primary">yjhC</name>
    <name type="ordered locus">LL0946</name>
    <name type="ORF">L172073</name>
</gene>
<accession>Q9CGZ6</accession>
<evidence type="ECO:0000255" key="1">
    <source>
        <dbReference type="HAMAP-Rule" id="MF_01054"/>
    </source>
</evidence>
<organism>
    <name type="scientific">Lactococcus lactis subsp. lactis (strain IL1403)</name>
    <name type="common">Streptococcus lactis</name>
    <dbReference type="NCBI Taxonomy" id="272623"/>
    <lineage>
        <taxon>Bacteria</taxon>
        <taxon>Bacillati</taxon>
        <taxon>Bacillota</taxon>
        <taxon>Bacilli</taxon>
        <taxon>Lactobacillales</taxon>
        <taxon>Streptococcaceae</taxon>
        <taxon>Lactococcus</taxon>
    </lineage>
</organism>
<sequence length="87" mass="9282">MRAVVTVVGADKIGIVAGVTATLAELEANIIEISQTLMSGAFTMMMVVETQNSDFSAFQAELSRKGEALGVNIHVQNEAIFNAMHKL</sequence>